<proteinExistence type="inferred from homology"/>
<sequence length="886" mass="102046">MEIKEEYSIELEKKVQEKWEDEKTFKFLDDEKRPPYIIDTPPPYPTGRMHLGHGLNWTYMDIIARFKRMNGYDVLFPQGWDCHGLPTEVKVEELNNITKSDIDRHEFRRLCVELTDENVEKMRGQVRSLGISIDWDREYITMNPDYVRKSQTAFLKMYEKGLIYRGKHPVNWCPRCETAIAFAEVEYQGRTSKLNYIKFPYAENSGKYLEIATSRPELMAACVGIVVHPEDERYSDVVGKTVKVPLFDQEVNVYPDSDVEKEFGTGVVMVCTFGDKTDVTWVNRHKLEVKKAINEKGQLTEICGKYAGKKSDDARKEIISDLISENYMIKQEPLEQNVGSCWRCKTPIEIIVGDQWFVNVTKLLTEVENAANEISWVPEHMKARLMKWIEDMGWDWCISRQRLFATPIPVWYCKDCGEIIVAKPEDLPIDPTKESPYTCKCGNSNLVAETDVLDTWMDSSITPLVIAGWLEDEEFFKKHYPVQLRPQGHDIIRTWAFYTMVRSLAITGEKPWDEIVINGMVFGEDGFKMSKSRGNVVEPGEITKTYGADALRLWASNSTIGKDVPFAWKEVEYGGRFLRKIWNACKFAKMNISDETISELKSLNSISIENPVDLWILSKLNNLISKVSDDLGNYKINTVVEIQKFLWHEFCDNYIEMVKHRLYNKEESESAQQEKLMAQYTLYKVITESVKLLTPFTPHFAEIVGEIYEIDDLHTSWPVSDERLISLENEFVGEVVKNTVASIRRYKSNKGMPLNAELNKVEMYVSDEKDFNAVSKASEDVKKSLKIKELEINLGKPSLEQKISEVTPNKSKIGPEFKKDAGKVMAFIKEADADTIEKMLSEGIETEFGILNKEHIKEVKRAIYNKGEIVETADIDSLIDTIAIIQ</sequence>
<feature type="chain" id="PRO_0000224623" description="Valine--tRNA ligase">
    <location>
        <begin position="1"/>
        <end position="886"/>
    </location>
</feature>
<feature type="short sequence motif" description="'HIGH' region">
    <location>
        <begin position="43"/>
        <end position="53"/>
    </location>
</feature>
<feature type="short sequence motif" description="'KMSKS' region">
    <location>
        <begin position="528"/>
        <end position="532"/>
    </location>
</feature>
<feature type="binding site" evidence="1">
    <location>
        <position position="531"/>
    </location>
    <ligand>
        <name>ATP</name>
        <dbReference type="ChEBI" id="CHEBI:30616"/>
    </ligand>
</feature>
<comment type="function">
    <text evidence="1">Catalyzes the attachment of valine to tRNA(Val). As ValRS can inadvertently accommodate and process structurally similar amino acids such as threonine, to avoid such errors, it has a 'posttransfer' editing activity that hydrolyzes mischarged Thr-tRNA(Val) in a tRNA-dependent manner.</text>
</comment>
<comment type="catalytic activity">
    <reaction evidence="1">
        <text>tRNA(Val) + L-valine + ATP = L-valyl-tRNA(Val) + AMP + diphosphate</text>
        <dbReference type="Rhea" id="RHEA:10704"/>
        <dbReference type="Rhea" id="RHEA-COMP:9672"/>
        <dbReference type="Rhea" id="RHEA-COMP:9708"/>
        <dbReference type="ChEBI" id="CHEBI:30616"/>
        <dbReference type="ChEBI" id="CHEBI:33019"/>
        <dbReference type="ChEBI" id="CHEBI:57762"/>
        <dbReference type="ChEBI" id="CHEBI:78442"/>
        <dbReference type="ChEBI" id="CHEBI:78537"/>
        <dbReference type="ChEBI" id="CHEBI:456215"/>
        <dbReference type="EC" id="6.1.1.9"/>
    </reaction>
</comment>
<comment type="subcellular location">
    <subcellularLocation>
        <location evidence="1">Cytoplasm</location>
    </subcellularLocation>
</comment>
<comment type="domain">
    <text evidence="1">ValRS has two distinct active sites: one for aminoacylation and one for editing. The misactivated threonine is translocated from the active site to the editing site.</text>
</comment>
<comment type="similarity">
    <text evidence="1">Belongs to the class-I aminoacyl-tRNA synthetase family. ValS type 2 subfamily.</text>
</comment>
<accession>Q6LZP0</accession>
<reference key="1">
    <citation type="journal article" date="2004" name="J. Bacteriol.">
        <title>Complete genome sequence of the genetically tractable hydrogenotrophic methanogen Methanococcus maripaludis.</title>
        <authorList>
            <person name="Hendrickson E.L."/>
            <person name="Kaul R."/>
            <person name="Zhou Y."/>
            <person name="Bovee D."/>
            <person name="Chapman P."/>
            <person name="Chung J."/>
            <person name="Conway de Macario E."/>
            <person name="Dodsworth J.A."/>
            <person name="Gillett W."/>
            <person name="Graham D.E."/>
            <person name="Hackett M."/>
            <person name="Haydock A.K."/>
            <person name="Kang A."/>
            <person name="Land M.L."/>
            <person name="Levy R."/>
            <person name="Lie T.J."/>
            <person name="Major T.A."/>
            <person name="Moore B.C."/>
            <person name="Porat I."/>
            <person name="Palmeiri A."/>
            <person name="Rouse G."/>
            <person name="Saenphimmachak C."/>
            <person name="Soell D."/>
            <person name="Van Dien S."/>
            <person name="Wang T."/>
            <person name="Whitman W.B."/>
            <person name="Xia Q."/>
            <person name="Zhang Y."/>
            <person name="Larimer F.W."/>
            <person name="Olson M.V."/>
            <person name="Leigh J.A."/>
        </authorList>
    </citation>
    <scope>NUCLEOTIDE SEQUENCE [LARGE SCALE GENOMIC DNA]</scope>
    <source>
        <strain>DSM 14266 / JCM 13030 / NBRC 101832 / S2 / LL</strain>
    </source>
</reference>
<dbReference type="EC" id="6.1.1.9" evidence="1"/>
<dbReference type="EMBL" id="BX950229">
    <property type="protein sequence ID" value="CAF30140.1"/>
    <property type="molecule type" value="Genomic_DNA"/>
</dbReference>
<dbReference type="RefSeq" id="WP_011170528.1">
    <property type="nucleotide sequence ID" value="NC_005791.1"/>
</dbReference>
<dbReference type="SMR" id="Q6LZP0"/>
<dbReference type="STRING" id="267377.MMP0584"/>
<dbReference type="EnsemblBacteria" id="CAF30140">
    <property type="protein sequence ID" value="CAF30140"/>
    <property type="gene ID" value="MMP0584"/>
</dbReference>
<dbReference type="GeneID" id="2761076"/>
<dbReference type="KEGG" id="mmp:MMP0584"/>
<dbReference type="PATRIC" id="fig|267377.15.peg.597"/>
<dbReference type="eggNOG" id="arCOG00808">
    <property type="taxonomic scope" value="Archaea"/>
</dbReference>
<dbReference type="HOGENOM" id="CLU_001493_0_2_2"/>
<dbReference type="OrthoDB" id="23906at2157"/>
<dbReference type="Proteomes" id="UP000000590">
    <property type="component" value="Chromosome"/>
</dbReference>
<dbReference type="GO" id="GO:0005829">
    <property type="term" value="C:cytosol"/>
    <property type="evidence" value="ECO:0007669"/>
    <property type="project" value="TreeGrafter"/>
</dbReference>
<dbReference type="GO" id="GO:0002161">
    <property type="term" value="F:aminoacyl-tRNA deacylase activity"/>
    <property type="evidence" value="ECO:0007669"/>
    <property type="project" value="InterPro"/>
</dbReference>
<dbReference type="GO" id="GO:0005524">
    <property type="term" value="F:ATP binding"/>
    <property type="evidence" value="ECO:0007669"/>
    <property type="project" value="UniProtKB-UniRule"/>
</dbReference>
<dbReference type="GO" id="GO:0004832">
    <property type="term" value="F:valine-tRNA ligase activity"/>
    <property type="evidence" value="ECO:0007669"/>
    <property type="project" value="UniProtKB-UniRule"/>
</dbReference>
<dbReference type="GO" id="GO:0006438">
    <property type="term" value="P:valyl-tRNA aminoacylation"/>
    <property type="evidence" value="ECO:0007669"/>
    <property type="project" value="UniProtKB-UniRule"/>
</dbReference>
<dbReference type="CDD" id="cd07962">
    <property type="entry name" value="Anticodon_Ia_Val"/>
    <property type="match status" value="1"/>
</dbReference>
<dbReference type="CDD" id="cd00817">
    <property type="entry name" value="ValRS_core"/>
    <property type="match status" value="1"/>
</dbReference>
<dbReference type="FunFam" id="3.40.50.620:FF:000192">
    <property type="entry name" value="Valine--tRNA ligase"/>
    <property type="match status" value="1"/>
</dbReference>
<dbReference type="Gene3D" id="3.30.720.200">
    <property type="match status" value="1"/>
</dbReference>
<dbReference type="Gene3D" id="3.40.50.620">
    <property type="entry name" value="HUPs"/>
    <property type="match status" value="2"/>
</dbReference>
<dbReference type="Gene3D" id="1.10.730.10">
    <property type="entry name" value="Isoleucyl-tRNA Synthetase, Domain 1"/>
    <property type="match status" value="1"/>
</dbReference>
<dbReference type="HAMAP" id="MF_02005">
    <property type="entry name" value="Val_tRNA_synth_type2"/>
    <property type="match status" value="1"/>
</dbReference>
<dbReference type="InterPro" id="IPR001412">
    <property type="entry name" value="aa-tRNA-synth_I_CS"/>
</dbReference>
<dbReference type="InterPro" id="IPR002300">
    <property type="entry name" value="aa-tRNA-synth_Ia"/>
</dbReference>
<dbReference type="InterPro" id="IPR033705">
    <property type="entry name" value="Anticodon_Ia_Val"/>
</dbReference>
<dbReference type="InterPro" id="IPR013155">
    <property type="entry name" value="M/V/L/I-tRNA-synth_anticd-bd"/>
</dbReference>
<dbReference type="InterPro" id="IPR014729">
    <property type="entry name" value="Rossmann-like_a/b/a_fold"/>
</dbReference>
<dbReference type="InterPro" id="IPR009080">
    <property type="entry name" value="tRNAsynth_Ia_anticodon-bd"/>
</dbReference>
<dbReference type="InterPro" id="IPR009008">
    <property type="entry name" value="Val/Leu/Ile-tRNA-synth_edit"/>
</dbReference>
<dbReference type="InterPro" id="IPR022874">
    <property type="entry name" value="Valine-tRNA_ligase_type_2"/>
</dbReference>
<dbReference type="InterPro" id="IPR002303">
    <property type="entry name" value="Valyl-tRNA_ligase"/>
</dbReference>
<dbReference type="NCBIfam" id="NF009687">
    <property type="entry name" value="PRK13208.1"/>
    <property type="match status" value="1"/>
</dbReference>
<dbReference type="NCBIfam" id="TIGR00422">
    <property type="entry name" value="valS"/>
    <property type="match status" value="1"/>
</dbReference>
<dbReference type="PANTHER" id="PTHR11946:SF93">
    <property type="entry name" value="VALINE--TRNA LIGASE, CHLOROPLASTIC_MITOCHONDRIAL 2"/>
    <property type="match status" value="1"/>
</dbReference>
<dbReference type="PANTHER" id="PTHR11946">
    <property type="entry name" value="VALYL-TRNA SYNTHETASES"/>
    <property type="match status" value="1"/>
</dbReference>
<dbReference type="Pfam" id="PF08264">
    <property type="entry name" value="Anticodon_1"/>
    <property type="match status" value="1"/>
</dbReference>
<dbReference type="Pfam" id="PF00133">
    <property type="entry name" value="tRNA-synt_1"/>
    <property type="match status" value="1"/>
</dbReference>
<dbReference type="PRINTS" id="PR00986">
    <property type="entry name" value="TRNASYNTHVAL"/>
</dbReference>
<dbReference type="SUPFAM" id="SSF47323">
    <property type="entry name" value="Anticodon-binding domain of a subclass of class I aminoacyl-tRNA synthetases"/>
    <property type="match status" value="1"/>
</dbReference>
<dbReference type="SUPFAM" id="SSF52374">
    <property type="entry name" value="Nucleotidylyl transferase"/>
    <property type="match status" value="1"/>
</dbReference>
<dbReference type="SUPFAM" id="SSF50677">
    <property type="entry name" value="ValRS/IleRS/LeuRS editing domain"/>
    <property type="match status" value="1"/>
</dbReference>
<dbReference type="PROSITE" id="PS00178">
    <property type="entry name" value="AA_TRNA_LIGASE_I"/>
    <property type="match status" value="1"/>
</dbReference>
<evidence type="ECO:0000255" key="1">
    <source>
        <dbReference type="HAMAP-Rule" id="MF_02005"/>
    </source>
</evidence>
<keyword id="KW-0030">Aminoacyl-tRNA synthetase</keyword>
<keyword id="KW-0067">ATP-binding</keyword>
<keyword id="KW-0963">Cytoplasm</keyword>
<keyword id="KW-0436">Ligase</keyword>
<keyword id="KW-0547">Nucleotide-binding</keyword>
<keyword id="KW-0648">Protein biosynthesis</keyword>
<keyword id="KW-1185">Reference proteome</keyword>
<organism>
    <name type="scientific">Methanococcus maripaludis (strain DSM 14266 / JCM 13030 / NBRC 101832 / S2 / LL)</name>
    <dbReference type="NCBI Taxonomy" id="267377"/>
    <lineage>
        <taxon>Archaea</taxon>
        <taxon>Methanobacteriati</taxon>
        <taxon>Methanobacteriota</taxon>
        <taxon>Methanomada group</taxon>
        <taxon>Methanococci</taxon>
        <taxon>Methanococcales</taxon>
        <taxon>Methanococcaceae</taxon>
        <taxon>Methanococcus</taxon>
    </lineage>
</organism>
<name>SYV_METMP</name>
<gene>
    <name evidence="1" type="primary">valS</name>
    <name type="ordered locus">MMP0584</name>
</gene>
<protein>
    <recommendedName>
        <fullName evidence="1">Valine--tRNA ligase</fullName>
        <ecNumber evidence="1">6.1.1.9</ecNumber>
    </recommendedName>
    <alternativeName>
        <fullName evidence="1">Valyl-tRNA synthetase</fullName>
        <shortName evidence="1">ValRS</shortName>
    </alternativeName>
</protein>